<reference key="1">
    <citation type="journal article" date="2010" name="Environ. Microbiol.">
        <title>The genome of Syntrophomonas wolfei: new insights into syntrophic metabolism and biohydrogen production.</title>
        <authorList>
            <person name="Sieber J.R."/>
            <person name="Sims D.R."/>
            <person name="Han C."/>
            <person name="Kim E."/>
            <person name="Lykidis A."/>
            <person name="Lapidus A.L."/>
            <person name="McDonnald E."/>
            <person name="Rohlin L."/>
            <person name="Culley D.E."/>
            <person name="Gunsalus R."/>
            <person name="McInerney M.J."/>
        </authorList>
    </citation>
    <scope>NUCLEOTIDE SEQUENCE [LARGE SCALE GENOMIC DNA]</scope>
    <source>
        <strain>DSM 2245B / Goettingen</strain>
    </source>
</reference>
<sequence length="276" mass="31535">MADNKLHIFAVSDSVGETAEKIAVASVLQFNLDRNITRFSRVTKEEQVEKIIDQAVENDAIIIYTIVKPELSRFLDETARIKQVIAVNVMAPLFDAIQFKTGQKPEYITGLTHKMDDQYFNRMKAIEYTIEHDNGQNLDSVHEADLIVLGLPRTSKTPLSMHLANLGIKVANYPILMDTEIPQEIVDLKGRIPMVGLTIDIDTLMELRKERFRSFELPDDIETLDDLVAEELDNAYRIYAKLKCLVIDVTLDDIEEVGNTITHKFNLPLRITHHRF</sequence>
<evidence type="ECO:0000255" key="1">
    <source>
        <dbReference type="HAMAP-Rule" id="MF_00921"/>
    </source>
</evidence>
<feature type="chain" id="PRO_0000316753" description="Putative pyruvate, phosphate dikinase regulatory protein 1">
    <location>
        <begin position="1"/>
        <end position="276"/>
    </location>
</feature>
<feature type="binding site" evidence="1">
    <location>
        <begin position="150"/>
        <end position="157"/>
    </location>
    <ligand>
        <name>ADP</name>
        <dbReference type="ChEBI" id="CHEBI:456216"/>
    </ligand>
</feature>
<dbReference type="EC" id="2.7.11.32" evidence="1"/>
<dbReference type="EC" id="2.7.4.27" evidence="1"/>
<dbReference type="EMBL" id="CP000448">
    <property type="protein sequence ID" value="ABI67688.1"/>
    <property type="molecule type" value="Genomic_DNA"/>
</dbReference>
<dbReference type="RefSeq" id="WP_011639796.1">
    <property type="nucleotide sequence ID" value="NC_008346.1"/>
</dbReference>
<dbReference type="SMR" id="Q0B016"/>
<dbReference type="STRING" id="335541.Swol_0347"/>
<dbReference type="KEGG" id="swo:Swol_0347"/>
<dbReference type="eggNOG" id="COG1806">
    <property type="taxonomic scope" value="Bacteria"/>
</dbReference>
<dbReference type="HOGENOM" id="CLU_046206_2_1_9"/>
<dbReference type="OrthoDB" id="9782201at2"/>
<dbReference type="Proteomes" id="UP000001968">
    <property type="component" value="Chromosome"/>
</dbReference>
<dbReference type="GO" id="GO:0043531">
    <property type="term" value="F:ADP binding"/>
    <property type="evidence" value="ECO:0007669"/>
    <property type="project" value="UniProtKB-UniRule"/>
</dbReference>
<dbReference type="GO" id="GO:0005524">
    <property type="term" value="F:ATP binding"/>
    <property type="evidence" value="ECO:0007669"/>
    <property type="project" value="InterPro"/>
</dbReference>
<dbReference type="GO" id="GO:0016776">
    <property type="term" value="F:phosphotransferase activity, phosphate group as acceptor"/>
    <property type="evidence" value="ECO:0007669"/>
    <property type="project" value="UniProtKB-UniRule"/>
</dbReference>
<dbReference type="GO" id="GO:0004674">
    <property type="term" value="F:protein serine/threonine kinase activity"/>
    <property type="evidence" value="ECO:0007669"/>
    <property type="project" value="UniProtKB-UniRule"/>
</dbReference>
<dbReference type="HAMAP" id="MF_00921">
    <property type="entry name" value="PDRP"/>
    <property type="match status" value="1"/>
</dbReference>
<dbReference type="InterPro" id="IPR005177">
    <property type="entry name" value="Kinase-pyrophosphorylase"/>
</dbReference>
<dbReference type="InterPro" id="IPR026565">
    <property type="entry name" value="PPDK_reg"/>
</dbReference>
<dbReference type="NCBIfam" id="NF003742">
    <property type="entry name" value="PRK05339.1"/>
    <property type="match status" value="1"/>
</dbReference>
<dbReference type="PANTHER" id="PTHR31756">
    <property type="entry name" value="PYRUVATE, PHOSPHATE DIKINASE REGULATORY PROTEIN 1, CHLOROPLASTIC"/>
    <property type="match status" value="1"/>
</dbReference>
<dbReference type="PANTHER" id="PTHR31756:SF3">
    <property type="entry name" value="PYRUVATE, PHOSPHATE DIKINASE REGULATORY PROTEIN 1, CHLOROPLASTIC"/>
    <property type="match status" value="1"/>
</dbReference>
<dbReference type="Pfam" id="PF03618">
    <property type="entry name" value="Kinase-PPPase"/>
    <property type="match status" value="1"/>
</dbReference>
<organism>
    <name type="scientific">Syntrophomonas wolfei subsp. wolfei (strain DSM 2245B / Goettingen)</name>
    <dbReference type="NCBI Taxonomy" id="335541"/>
    <lineage>
        <taxon>Bacteria</taxon>
        <taxon>Bacillati</taxon>
        <taxon>Bacillota</taxon>
        <taxon>Clostridia</taxon>
        <taxon>Eubacteriales</taxon>
        <taxon>Syntrophomonadaceae</taxon>
        <taxon>Syntrophomonas</taxon>
    </lineage>
</organism>
<accession>Q0B016</accession>
<proteinExistence type="inferred from homology"/>
<gene>
    <name type="ordered locus">Swol_0347</name>
</gene>
<name>PDRP1_SYNWW</name>
<protein>
    <recommendedName>
        <fullName evidence="1">Putative pyruvate, phosphate dikinase regulatory protein 1</fullName>
        <shortName evidence="1">PPDK regulatory protein 1</shortName>
        <ecNumber evidence="1">2.7.11.32</ecNumber>
        <ecNumber evidence="1">2.7.4.27</ecNumber>
    </recommendedName>
</protein>
<comment type="function">
    <text evidence="1">Bifunctional serine/threonine kinase and phosphorylase involved in the regulation of the pyruvate, phosphate dikinase (PPDK) by catalyzing its phosphorylation/dephosphorylation.</text>
</comment>
<comment type="catalytic activity">
    <reaction evidence="1">
        <text>N(tele)-phospho-L-histidyl/L-threonyl-[pyruvate, phosphate dikinase] + ADP = N(tele)-phospho-L-histidyl/O-phospho-L-threonyl-[pyruvate, phosphate dikinase] + AMP + H(+)</text>
        <dbReference type="Rhea" id="RHEA:43692"/>
        <dbReference type="Rhea" id="RHEA-COMP:10650"/>
        <dbReference type="Rhea" id="RHEA-COMP:10651"/>
        <dbReference type="ChEBI" id="CHEBI:15378"/>
        <dbReference type="ChEBI" id="CHEBI:30013"/>
        <dbReference type="ChEBI" id="CHEBI:61977"/>
        <dbReference type="ChEBI" id="CHEBI:83586"/>
        <dbReference type="ChEBI" id="CHEBI:456215"/>
        <dbReference type="ChEBI" id="CHEBI:456216"/>
        <dbReference type="EC" id="2.7.11.32"/>
    </reaction>
</comment>
<comment type="catalytic activity">
    <reaction evidence="1">
        <text>N(tele)-phospho-L-histidyl/O-phospho-L-threonyl-[pyruvate, phosphate dikinase] + phosphate + H(+) = N(tele)-phospho-L-histidyl/L-threonyl-[pyruvate, phosphate dikinase] + diphosphate</text>
        <dbReference type="Rhea" id="RHEA:43696"/>
        <dbReference type="Rhea" id="RHEA-COMP:10650"/>
        <dbReference type="Rhea" id="RHEA-COMP:10651"/>
        <dbReference type="ChEBI" id="CHEBI:15378"/>
        <dbReference type="ChEBI" id="CHEBI:30013"/>
        <dbReference type="ChEBI" id="CHEBI:33019"/>
        <dbReference type="ChEBI" id="CHEBI:43474"/>
        <dbReference type="ChEBI" id="CHEBI:61977"/>
        <dbReference type="ChEBI" id="CHEBI:83586"/>
        <dbReference type="EC" id="2.7.4.27"/>
    </reaction>
</comment>
<comment type="similarity">
    <text evidence="1">Belongs to the pyruvate, phosphate/water dikinase regulatory protein family. PDRP subfamily.</text>
</comment>
<keyword id="KW-0418">Kinase</keyword>
<keyword id="KW-0547">Nucleotide-binding</keyword>
<keyword id="KW-1185">Reference proteome</keyword>
<keyword id="KW-0723">Serine/threonine-protein kinase</keyword>
<keyword id="KW-0808">Transferase</keyword>